<accession>Q6BJD8</accession>
<gene>
    <name type="primary">RNA14</name>
    <name type="ordered locus">DEHA2G03168g</name>
</gene>
<keyword id="KW-0963">Cytoplasm</keyword>
<keyword id="KW-0507">mRNA processing</keyword>
<keyword id="KW-0539">Nucleus</keyword>
<keyword id="KW-1185">Reference proteome</keyword>
<keyword id="KW-0677">Repeat</keyword>
<feature type="chain" id="PRO_0000238523" description="mRNA 3'-end-processing protein RNA14">
    <location>
        <begin position="1"/>
        <end position="740"/>
    </location>
</feature>
<feature type="repeat" description="HAT 1">
    <location>
        <begin position="48"/>
        <end position="78"/>
    </location>
</feature>
<feature type="repeat" description="HAT 2">
    <location>
        <begin position="80"/>
        <end position="114"/>
    </location>
</feature>
<feature type="repeat" description="HAT 3">
    <location>
        <begin position="121"/>
        <end position="156"/>
    </location>
</feature>
<feature type="repeat" description="HAT 4">
    <location>
        <begin position="167"/>
        <end position="200"/>
    </location>
</feature>
<feature type="repeat" description="HAT 5">
    <location>
        <begin position="236"/>
        <end position="268"/>
    </location>
</feature>
<feature type="repeat" description="HAT 6">
    <location>
        <begin position="278"/>
        <end position="310"/>
    </location>
</feature>
<feature type="repeat" description="HAT 7">
    <location>
        <begin position="494"/>
        <end position="526"/>
    </location>
</feature>
<feature type="region of interest" description="Disordered" evidence="2">
    <location>
        <begin position="381"/>
        <end position="418"/>
    </location>
</feature>
<feature type="region of interest" description="Disordered" evidence="2">
    <location>
        <begin position="668"/>
        <end position="688"/>
    </location>
</feature>
<feature type="compositionally biased region" description="Acidic residues" evidence="2">
    <location>
        <begin position="392"/>
        <end position="413"/>
    </location>
</feature>
<feature type="compositionally biased region" description="Polar residues" evidence="2">
    <location>
        <begin position="672"/>
        <end position="688"/>
    </location>
</feature>
<reference key="1">
    <citation type="journal article" date="2004" name="Nature">
        <title>Genome evolution in yeasts.</title>
        <authorList>
            <person name="Dujon B."/>
            <person name="Sherman D."/>
            <person name="Fischer G."/>
            <person name="Durrens P."/>
            <person name="Casaregola S."/>
            <person name="Lafontaine I."/>
            <person name="de Montigny J."/>
            <person name="Marck C."/>
            <person name="Neuveglise C."/>
            <person name="Talla E."/>
            <person name="Goffard N."/>
            <person name="Frangeul L."/>
            <person name="Aigle M."/>
            <person name="Anthouard V."/>
            <person name="Babour A."/>
            <person name="Barbe V."/>
            <person name="Barnay S."/>
            <person name="Blanchin S."/>
            <person name="Beckerich J.-M."/>
            <person name="Beyne E."/>
            <person name="Bleykasten C."/>
            <person name="Boisrame A."/>
            <person name="Boyer J."/>
            <person name="Cattolico L."/>
            <person name="Confanioleri F."/>
            <person name="de Daruvar A."/>
            <person name="Despons L."/>
            <person name="Fabre E."/>
            <person name="Fairhead C."/>
            <person name="Ferry-Dumazet H."/>
            <person name="Groppi A."/>
            <person name="Hantraye F."/>
            <person name="Hennequin C."/>
            <person name="Jauniaux N."/>
            <person name="Joyet P."/>
            <person name="Kachouri R."/>
            <person name="Kerrest A."/>
            <person name="Koszul R."/>
            <person name="Lemaire M."/>
            <person name="Lesur I."/>
            <person name="Ma L."/>
            <person name="Muller H."/>
            <person name="Nicaud J.-M."/>
            <person name="Nikolski M."/>
            <person name="Oztas S."/>
            <person name="Ozier-Kalogeropoulos O."/>
            <person name="Pellenz S."/>
            <person name="Potier S."/>
            <person name="Richard G.-F."/>
            <person name="Straub M.-L."/>
            <person name="Suleau A."/>
            <person name="Swennen D."/>
            <person name="Tekaia F."/>
            <person name="Wesolowski-Louvel M."/>
            <person name="Westhof E."/>
            <person name="Wirth B."/>
            <person name="Zeniou-Meyer M."/>
            <person name="Zivanovic Y."/>
            <person name="Bolotin-Fukuhara M."/>
            <person name="Thierry A."/>
            <person name="Bouchier C."/>
            <person name="Caudron B."/>
            <person name="Scarpelli C."/>
            <person name="Gaillardin C."/>
            <person name="Weissenbach J."/>
            <person name="Wincker P."/>
            <person name="Souciet J.-L."/>
        </authorList>
    </citation>
    <scope>NUCLEOTIDE SEQUENCE [LARGE SCALE GENOMIC DNA]</scope>
    <source>
        <strain>ATCC 36239 / CBS 767 / BCRC 21394 / JCM 1990 / NBRC 0083 / IGC 2968</strain>
    </source>
</reference>
<organism>
    <name type="scientific">Debaryomyces hansenii (strain ATCC 36239 / CBS 767 / BCRC 21394 / JCM 1990 / NBRC 0083 / IGC 2968)</name>
    <name type="common">Yeast</name>
    <name type="synonym">Torulaspora hansenii</name>
    <dbReference type="NCBI Taxonomy" id="284592"/>
    <lineage>
        <taxon>Eukaryota</taxon>
        <taxon>Fungi</taxon>
        <taxon>Dikarya</taxon>
        <taxon>Ascomycota</taxon>
        <taxon>Saccharomycotina</taxon>
        <taxon>Pichiomycetes</taxon>
        <taxon>Debaryomycetaceae</taxon>
        <taxon>Debaryomyces</taxon>
    </lineage>
</organism>
<protein>
    <recommendedName>
        <fullName>mRNA 3'-end-processing protein RNA14</fullName>
    </recommendedName>
</protein>
<dbReference type="EMBL" id="CR382139">
    <property type="protein sequence ID" value="CAG90131.2"/>
    <property type="molecule type" value="Genomic_DNA"/>
</dbReference>
<dbReference type="RefSeq" id="XP_461683.2">
    <property type="nucleotide sequence ID" value="XM_461683.2"/>
</dbReference>
<dbReference type="SMR" id="Q6BJD8"/>
<dbReference type="FunCoup" id="Q6BJD8">
    <property type="interactions" value="1255"/>
</dbReference>
<dbReference type="STRING" id="284592.Q6BJD8"/>
<dbReference type="GeneID" id="2904551"/>
<dbReference type="KEGG" id="dha:DEHA2G03168g"/>
<dbReference type="VEuPathDB" id="FungiDB:DEHA2G03168g"/>
<dbReference type="eggNOG" id="KOG1914">
    <property type="taxonomic scope" value="Eukaryota"/>
</dbReference>
<dbReference type="HOGENOM" id="CLU_007630_0_1_1"/>
<dbReference type="InParanoid" id="Q6BJD8"/>
<dbReference type="OMA" id="PKRQYFK"/>
<dbReference type="OrthoDB" id="26282at2759"/>
<dbReference type="Proteomes" id="UP000000599">
    <property type="component" value="Chromosome G"/>
</dbReference>
<dbReference type="GO" id="GO:0005737">
    <property type="term" value="C:cytoplasm"/>
    <property type="evidence" value="ECO:0007669"/>
    <property type="project" value="UniProtKB-SubCell"/>
</dbReference>
<dbReference type="GO" id="GO:0005634">
    <property type="term" value="C:nucleus"/>
    <property type="evidence" value="ECO:0007669"/>
    <property type="project" value="UniProtKB-SubCell"/>
</dbReference>
<dbReference type="GO" id="GO:0003729">
    <property type="term" value="F:mRNA binding"/>
    <property type="evidence" value="ECO:0007669"/>
    <property type="project" value="TreeGrafter"/>
</dbReference>
<dbReference type="GO" id="GO:0031124">
    <property type="term" value="P:mRNA 3'-end processing"/>
    <property type="evidence" value="ECO:0007669"/>
    <property type="project" value="InterPro"/>
</dbReference>
<dbReference type="Gene3D" id="1.25.40.1040">
    <property type="match status" value="1"/>
</dbReference>
<dbReference type="InterPro" id="IPR003107">
    <property type="entry name" value="HAT"/>
</dbReference>
<dbReference type="InterPro" id="IPR045243">
    <property type="entry name" value="Rna14-like"/>
</dbReference>
<dbReference type="InterPro" id="IPR008847">
    <property type="entry name" value="Suf"/>
</dbReference>
<dbReference type="InterPro" id="IPR011990">
    <property type="entry name" value="TPR-like_helical_dom_sf"/>
</dbReference>
<dbReference type="PANTHER" id="PTHR19980:SF0">
    <property type="entry name" value="CLEAVAGE STIMULATION FACTOR SUBUNIT 3"/>
    <property type="match status" value="1"/>
</dbReference>
<dbReference type="PANTHER" id="PTHR19980">
    <property type="entry name" value="RNA CLEAVAGE STIMULATION FACTOR"/>
    <property type="match status" value="1"/>
</dbReference>
<dbReference type="Pfam" id="PF05843">
    <property type="entry name" value="Suf"/>
    <property type="match status" value="1"/>
</dbReference>
<dbReference type="SMART" id="SM00386">
    <property type="entry name" value="HAT"/>
    <property type="match status" value="7"/>
</dbReference>
<dbReference type="SUPFAM" id="SSF48452">
    <property type="entry name" value="TPR-like"/>
    <property type="match status" value="2"/>
</dbReference>
<proteinExistence type="inferred from homology"/>
<comment type="function">
    <text evidence="1">Component of the cleavage factor IA (CFIA) complex, which is involved in the endonucleolytic cleavage during polyadenylation-dependent pre-mRNA 3'-end formation.</text>
</comment>
<comment type="subcellular location">
    <subcellularLocation>
        <location evidence="1">Nucleus</location>
    </subcellularLocation>
    <subcellularLocation>
        <location evidence="1">Cytoplasm</location>
    </subcellularLocation>
    <text evidence="1">Nucleus and/or cytoplasm.</text>
</comment>
<sequence>MPSNMFIQADKKKRLSLDVIGQLEDDLEADPLDYNKWNKLIQQVLAKDKEEQVKSVFNKYLNIFNFDQWCNYINYQLNRGEFQEVEQLFSKCLPITDHVELCRLYVSYVRRTNDVITGGEKARGIVVQAFEFAVTKVGIDISSGDLWNDYLDFLKAWTPAATWEQQQKTDLIRRVYKRFLVIPTEKIEQVWSTYTKWENEVNASSANKFIAEKSSEFMDARSWNTEWHNATERSLRREVIPIGIHNDNNNLVHTQLQLWYKWIALERENKLNLKDDSSVQQRIEYVYKQAIMALPFVPELWFKFNKFWLRSNEEANSNKCIELLNEALVLNPRSYLLTFQLSEMYEKDNTINKATETYDNLITFLTNDYNNINNQIESITNRELNNKKQEENTGEENNNENDDSDNDDNDDDDSFKNPTFQLSEEDALLLSKLQEKKDELNKAITLVYTKLMMACKRSRGIKEARGVFKQARNNFEAIGYEFYVENALMEYHSDNLKTASKIFELGMKHFKKQGEFLLAYLDFLIMINKGESIKVLFEQGLTALLQDVNIENENSNGDITSGANMRLQESKSKENIKKKNCIKKLIKKFSRYQSVYGDLDLIKSLDSRYEEYFPDDDSIELFSDRYRGHSIDVIKHFDLGKEDTSHEEIDTTAQETKRRKIQNPTVDEFTPEVSNNNNQHTNNKDAVQNQQQPQNFVGNTIYNLLRVLPNSSYFGPPSDHLFNNTKLVELFGNLPNVPTE</sequence>
<evidence type="ECO:0000250" key="1"/>
<evidence type="ECO:0000256" key="2">
    <source>
        <dbReference type="SAM" id="MobiDB-lite"/>
    </source>
</evidence>
<name>RNA14_DEBHA</name>